<protein>
    <recommendedName>
        <fullName evidence="1">DNA mismatch repair protein MutS</fullName>
    </recommendedName>
</protein>
<reference key="1">
    <citation type="submission" date="2009-01" db="EMBL/GenBank/DDBJ databases">
        <title>Complete sequence of Clostridium cellulolyticum H10.</title>
        <authorList>
            <consortium name="US DOE Joint Genome Institute"/>
            <person name="Lucas S."/>
            <person name="Copeland A."/>
            <person name="Lapidus A."/>
            <person name="Glavina del Rio T."/>
            <person name="Dalin E."/>
            <person name="Tice H."/>
            <person name="Bruce D."/>
            <person name="Goodwin L."/>
            <person name="Pitluck S."/>
            <person name="Chertkov O."/>
            <person name="Saunders E."/>
            <person name="Brettin T."/>
            <person name="Detter J.C."/>
            <person name="Han C."/>
            <person name="Larimer F."/>
            <person name="Land M."/>
            <person name="Hauser L."/>
            <person name="Kyrpides N."/>
            <person name="Ivanova N."/>
            <person name="Zhou J."/>
            <person name="Richardson P."/>
        </authorList>
    </citation>
    <scope>NUCLEOTIDE SEQUENCE [LARGE SCALE GENOMIC DNA]</scope>
    <source>
        <strain>ATCC 35319 / DSM 5812 / JCM 6584 / H10</strain>
    </source>
</reference>
<accession>B8I2Q5</accession>
<evidence type="ECO:0000255" key="1">
    <source>
        <dbReference type="HAMAP-Rule" id="MF_00096"/>
    </source>
</evidence>
<name>MUTS_RUMCH</name>
<dbReference type="EMBL" id="CP001348">
    <property type="protein sequence ID" value="ACL76048.1"/>
    <property type="molecule type" value="Genomic_DNA"/>
</dbReference>
<dbReference type="RefSeq" id="WP_015925163.1">
    <property type="nucleotide sequence ID" value="NC_011898.1"/>
</dbReference>
<dbReference type="SMR" id="B8I2Q5"/>
<dbReference type="STRING" id="394503.Ccel_1697"/>
<dbReference type="KEGG" id="cce:Ccel_1697"/>
<dbReference type="eggNOG" id="COG0249">
    <property type="taxonomic scope" value="Bacteria"/>
</dbReference>
<dbReference type="HOGENOM" id="CLU_002472_4_0_9"/>
<dbReference type="OrthoDB" id="9802448at2"/>
<dbReference type="Proteomes" id="UP000001349">
    <property type="component" value="Chromosome"/>
</dbReference>
<dbReference type="GO" id="GO:0005829">
    <property type="term" value="C:cytosol"/>
    <property type="evidence" value="ECO:0007669"/>
    <property type="project" value="TreeGrafter"/>
</dbReference>
<dbReference type="GO" id="GO:0005524">
    <property type="term" value="F:ATP binding"/>
    <property type="evidence" value="ECO:0007669"/>
    <property type="project" value="UniProtKB-UniRule"/>
</dbReference>
<dbReference type="GO" id="GO:0140664">
    <property type="term" value="F:ATP-dependent DNA damage sensor activity"/>
    <property type="evidence" value="ECO:0007669"/>
    <property type="project" value="InterPro"/>
</dbReference>
<dbReference type="GO" id="GO:0003684">
    <property type="term" value="F:damaged DNA binding"/>
    <property type="evidence" value="ECO:0007669"/>
    <property type="project" value="UniProtKB-UniRule"/>
</dbReference>
<dbReference type="GO" id="GO:0030983">
    <property type="term" value="F:mismatched DNA binding"/>
    <property type="evidence" value="ECO:0007669"/>
    <property type="project" value="InterPro"/>
</dbReference>
<dbReference type="GO" id="GO:0006298">
    <property type="term" value="P:mismatch repair"/>
    <property type="evidence" value="ECO:0007669"/>
    <property type="project" value="UniProtKB-UniRule"/>
</dbReference>
<dbReference type="CDD" id="cd03284">
    <property type="entry name" value="ABC_MutS1"/>
    <property type="match status" value="1"/>
</dbReference>
<dbReference type="FunFam" id="1.10.1420.10:FF:000001">
    <property type="entry name" value="DNA mismatch repair protein MutS"/>
    <property type="match status" value="1"/>
</dbReference>
<dbReference type="FunFam" id="3.40.1170.10:FF:000001">
    <property type="entry name" value="DNA mismatch repair protein MutS"/>
    <property type="match status" value="1"/>
</dbReference>
<dbReference type="FunFam" id="3.40.50.300:FF:001579">
    <property type="entry name" value="DNA mismatch repair protein MutS"/>
    <property type="match status" value="1"/>
</dbReference>
<dbReference type="Gene3D" id="1.10.1420.10">
    <property type="match status" value="2"/>
</dbReference>
<dbReference type="Gene3D" id="3.40.1170.10">
    <property type="entry name" value="DNA repair protein MutS, domain I"/>
    <property type="match status" value="1"/>
</dbReference>
<dbReference type="Gene3D" id="3.30.420.110">
    <property type="entry name" value="MutS, connector domain"/>
    <property type="match status" value="1"/>
</dbReference>
<dbReference type="Gene3D" id="3.40.50.300">
    <property type="entry name" value="P-loop containing nucleotide triphosphate hydrolases"/>
    <property type="match status" value="1"/>
</dbReference>
<dbReference type="HAMAP" id="MF_00096">
    <property type="entry name" value="MutS"/>
    <property type="match status" value="1"/>
</dbReference>
<dbReference type="InterPro" id="IPR005748">
    <property type="entry name" value="DNA_mismatch_repair_MutS"/>
</dbReference>
<dbReference type="InterPro" id="IPR007695">
    <property type="entry name" value="DNA_mismatch_repair_MutS-lik_N"/>
</dbReference>
<dbReference type="InterPro" id="IPR017261">
    <property type="entry name" value="DNA_mismatch_repair_MutS/MSH"/>
</dbReference>
<dbReference type="InterPro" id="IPR000432">
    <property type="entry name" value="DNA_mismatch_repair_MutS_C"/>
</dbReference>
<dbReference type="InterPro" id="IPR007861">
    <property type="entry name" value="DNA_mismatch_repair_MutS_clamp"/>
</dbReference>
<dbReference type="InterPro" id="IPR007696">
    <property type="entry name" value="DNA_mismatch_repair_MutS_core"/>
</dbReference>
<dbReference type="InterPro" id="IPR016151">
    <property type="entry name" value="DNA_mismatch_repair_MutS_N"/>
</dbReference>
<dbReference type="InterPro" id="IPR036187">
    <property type="entry name" value="DNA_mismatch_repair_MutS_sf"/>
</dbReference>
<dbReference type="InterPro" id="IPR007860">
    <property type="entry name" value="DNA_mmatch_repair_MutS_con_dom"/>
</dbReference>
<dbReference type="InterPro" id="IPR045076">
    <property type="entry name" value="MutS"/>
</dbReference>
<dbReference type="InterPro" id="IPR036678">
    <property type="entry name" value="MutS_con_dom_sf"/>
</dbReference>
<dbReference type="InterPro" id="IPR027417">
    <property type="entry name" value="P-loop_NTPase"/>
</dbReference>
<dbReference type="NCBIfam" id="TIGR01070">
    <property type="entry name" value="mutS1"/>
    <property type="match status" value="1"/>
</dbReference>
<dbReference type="NCBIfam" id="NF003810">
    <property type="entry name" value="PRK05399.1"/>
    <property type="match status" value="1"/>
</dbReference>
<dbReference type="PANTHER" id="PTHR11361:SF34">
    <property type="entry name" value="DNA MISMATCH REPAIR PROTEIN MSH1, MITOCHONDRIAL"/>
    <property type="match status" value="1"/>
</dbReference>
<dbReference type="PANTHER" id="PTHR11361">
    <property type="entry name" value="DNA MISMATCH REPAIR PROTEIN MUTS FAMILY MEMBER"/>
    <property type="match status" value="1"/>
</dbReference>
<dbReference type="Pfam" id="PF01624">
    <property type="entry name" value="MutS_I"/>
    <property type="match status" value="1"/>
</dbReference>
<dbReference type="Pfam" id="PF05188">
    <property type="entry name" value="MutS_II"/>
    <property type="match status" value="1"/>
</dbReference>
<dbReference type="Pfam" id="PF05192">
    <property type="entry name" value="MutS_III"/>
    <property type="match status" value="1"/>
</dbReference>
<dbReference type="Pfam" id="PF05190">
    <property type="entry name" value="MutS_IV"/>
    <property type="match status" value="1"/>
</dbReference>
<dbReference type="Pfam" id="PF00488">
    <property type="entry name" value="MutS_V"/>
    <property type="match status" value="1"/>
</dbReference>
<dbReference type="PIRSF" id="PIRSF037677">
    <property type="entry name" value="DNA_mis_repair_Msh6"/>
    <property type="match status" value="1"/>
</dbReference>
<dbReference type="SMART" id="SM00534">
    <property type="entry name" value="MUTSac"/>
    <property type="match status" value="1"/>
</dbReference>
<dbReference type="SMART" id="SM00533">
    <property type="entry name" value="MUTSd"/>
    <property type="match status" value="1"/>
</dbReference>
<dbReference type="SUPFAM" id="SSF55271">
    <property type="entry name" value="DNA repair protein MutS, domain I"/>
    <property type="match status" value="1"/>
</dbReference>
<dbReference type="SUPFAM" id="SSF53150">
    <property type="entry name" value="DNA repair protein MutS, domain II"/>
    <property type="match status" value="1"/>
</dbReference>
<dbReference type="SUPFAM" id="SSF48334">
    <property type="entry name" value="DNA repair protein MutS, domain III"/>
    <property type="match status" value="1"/>
</dbReference>
<dbReference type="SUPFAM" id="SSF52540">
    <property type="entry name" value="P-loop containing nucleoside triphosphate hydrolases"/>
    <property type="match status" value="1"/>
</dbReference>
<dbReference type="PROSITE" id="PS00486">
    <property type="entry name" value="DNA_MISMATCH_REPAIR_2"/>
    <property type="match status" value="1"/>
</dbReference>
<keyword id="KW-0067">ATP-binding</keyword>
<keyword id="KW-0227">DNA damage</keyword>
<keyword id="KW-0234">DNA repair</keyword>
<keyword id="KW-0238">DNA-binding</keyword>
<keyword id="KW-0547">Nucleotide-binding</keyword>
<keyword id="KW-1185">Reference proteome</keyword>
<organism>
    <name type="scientific">Ruminiclostridium cellulolyticum (strain ATCC 35319 / DSM 5812 / JCM 6584 / H10)</name>
    <name type="common">Clostridium cellulolyticum</name>
    <dbReference type="NCBI Taxonomy" id="394503"/>
    <lineage>
        <taxon>Bacteria</taxon>
        <taxon>Bacillati</taxon>
        <taxon>Bacillota</taxon>
        <taxon>Clostridia</taxon>
        <taxon>Eubacteriales</taxon>
        <taxon>Oscillospiraceae</taxon>
        <taxon>Ruminiclostridium</taxon>
    </lineage>
</organism>
<feature type="chain" id="PRO_1000118678" description="DNA mismatch repair protein MutS">
    <location>
        <begin position="1"/>
        <end position="873"/>
    </location>
</feature>
<feature type="binding site" evidence="1">
    <location>
        <begin position="620"/>
        <end position="627"/>
    </location>
    <ligand>
        <name>ATP</name>
        <dbReference type="ChEBI" id="CHEBI:30616"/>
    </ligand>
</feature>
<proteinExistence type="inferred from homology"/>
<gene>
    <name evidence="1" type="primary">mutS</name>
    <name type="ordered locus">Ccel_1697</name>
</gene>
<sequence length="873" mass="98402">MGTVTPMMQQYLDIKEQYKDCILFFRLGDFYEMFFSDAELASRELEITLTGRDCGLEERAPMCGVPFHAADNYIARLVSKGYKVAICEQVEDPALAKGIVKRDVVKVVTPGTVTDITMLDERKNNYLMSVYKNGNFYGLASVDITTGDFYATRITWGNTRGKLLDEIAKYLPSEIIVNNELNSDNELTSEIKQRFNTYVSTFEETSFEYGNSMDILANHFEKQTLNIQEYDIAVNASGALLKYLESTQKVNLSHIQKFNSYALEEYMILDASSRRNLELTETMREKSKKGSLLWVLDKTMTSMGGRLLRKWIEQPLINHGDISLRLDAVEELKNKFMVRVEARELLKRVYDIERLMGKVVLGSVNCRDLIALKNSMCQIPYIKSLLNGFEAEYIKNCGEQLDCLEDVCNLIEVSIIDEPPVTIKEGGIIKDGYNPEVDKLRMASIQGKDWIAALEASQREKTGIKNLKVGFNRVFGYYIEVTKSYFSLVPEEYIRKQTLSNCERYITPELKEIEDTILGAEEKIIQLEYSLFVEIKEKIAEQLSRIKSTARALAEIDVLASLAEVADREGYCKPEVSLSDKIEIIEGRHPVVEKMTDKSGFVPNDTVLDMEEDRLAIITGPNMAGKSTYMRQTALIVLMAQIGSFVPAATAKIGLVDRIFTRVGASDDLASGQSTFMVEMSEVANILINATKRSLLVLDEIGRGTSTFDGLSIAWAVIEYIVNKEQLGCRTLFATHYHELTELEGKLPGIKNYCITVKEKGEDVIFLRKIIRGGADGSYGIQVAKLAGVPQSVIDRAKEILSNLDDADINRSGKARRIKKQVDGQLDLFAQAAKASADAEILEEIRKIDISRLTPIDSMNILYELQRKMNNRE</sequence>
<comment type="function">
    <text evidence="1">This protein is involved in the repair of mismatches in DNA. It is possible that it carries out the mismatch recognition step. This protein has a weak ATPase activity.</text>
</comment>
<comment type="similarity">
    <text evidence="1">Belongs to the DNA mismatch repair MutS family.</text>
</comment>